<dbReference type="EC" id="2.7.7.60" evidence="1"/>
<dbReference type="EMBL" id="CP000238">
    <property type="protein sequence ID" value="ABF14203.1"/>
    <property type="molecule type" value="Genomic_DNA"/>
</dbReference>
<dbReference type="RefSeq" id="WP_011520399.1">
    <property type="nucleotide sequence ID" value="NC_007984.1"/>
</dbReference>
<dbReference type="SMR" id="Q1LTP8"/>
<dbReference type="STRING" id="374463.BCI_0211"/>
<dbReference type="KEGG" id="bci:BCI_0211"/>
<dbReference type="HOGENOM" id="CLU_061281_3_1_6"/>
<dbReference type="OrthoDB" id="9806837at2"/>
<dbReference type="UniPathway" id="UPA00056">
    <property type="reaction ID" value="UER00093"/>
</dbReference>
<dbReference type="Proteomes" id="UP000002427">
    <property type="component" value="Chromosome"/>
</dbReference>
<dbReference type="GO" id="GO:0050518">
    <property type="term" value="F:2-C-methyl-D-erythritol 4-phosphate cytidylyltransferase activity"/>
    <property type="evidence" value="ECO:0007669"/>
    <property type="project" value="UniProtKB-UniRule"/>
</dbReference>
<dbReference type="GO" id="GO:0019288">
    <property type="term" value="P:isopentenyl diphosphate biosynthetic process, methylerythritol 4-phosphate pathway"/>
    <property type="evidence" value="ECO:0007669"/>
    <property type="project" value="UniProtKB-UniRule"/>
</dbReference>
<dbReference type="CDD" id="cd02516">
    <property type="entry name" value="CDP-ME_synthetase"/>
    <property type="match status" value="1"/>
</dbReference>
<dbReference type="FunFam" id="3.90.550.10:FF:000003">
    <property type="entry name" value="2-C-methyl-D-erythritol 4-phosphate cytidylyltransferase"/>
    <property type="match status" value="1"/>
</dbReference>
<dbReference type="Gene3D" id="3.90.550.10">
    <property type="entry name" value="Spore Coat Polysaccharide Biosynthesis Protein SpsA, Chain A"/>
    <property type="match status" value="1"/>
</dbReference>
<dbReference type="HAMAP" id="MF_00108">
    <property type="entry name" value="IspD"/>
    <property type="match status" value="1"/>
</dbReference>
<dbReference type="InterPro" id="IPR001228">
    <property type="entry name" value="IspD"/>
</dbReference>
<dbReference type="InterPro" id="IPR034683">
    <property type="entry name" value="IspD/TarI"/>
</dbReference>
<dbReference type="InterPro" id="IPR050088">
    <property type="entry name" value="IspD/TarI_cytidylyltransf_bact"/>
</dbReference>
<dbReference type="InterPro" id="IPR018294">
    <property type="entry name" value="ISPD_synthase_CS"/>
</dbReference>
<dbReference type="InterPro" id="IPR029044">
    <property type="entry name" value="Nucleotide-diphossugar_trans"/>
</dbReference>
<dbReference type="NCBIfam" id="TIGR00453">
    <property type="entry name" value="ispD"/>
    <property type="match status" value="1"/>
</dbReference>
<dbReference type="PANTHER" id="PTHR32125">
    <property type="entry name" value="2-C-METHYL-D-ERYTHRITOL 4-PHOSPHATE CYTIDYLYLTRANSFERASE, CHLOROPLASTIC"/>
    <property type="match status" value="1"/>
</dbReference>
<dbReference type="PANTHER" id="PTHR32125:SF4">
    <property type="entry name" value="2-C-METHYL-D-ERYTHRITOL 4-PHOSPHATE CYTIDYLYLTRANSFERASE, CHLOROPLASTIC"/>
    <property type="match status" value="1"/>
</dbReference>
<dbReference type="Pfam" id="PF01128">
    <property type="entry name" value="IspD"/>
    <property type="match status" value="1"/>
</dbReference>
<dbReference type="SUPFAM" id="SSF53448">
    <property type="entry name" value="Nucleotide-diphospho-sugar transferases"/>
    <property type="match status" value="1"/>
</dbReference>
<dbReference type="PROSITE" id="PS01295">
    <property type="entry name" value="ISPD"/>
    <property type="match status" value="1"/>
</dbReference>
<reference key="1">
    <citation type="journal article" date="2006" name="PLoS Biol.">
        <title>Metabolic complementarity and genomics of the dual bacterial symbiosis of sharpshooters.</title>
        <authorList>
            <person name="Wu D."/>
            <person name="Daugherty S.C."/>
            <person name="Van Aken S.E."/>
            <person name="Pai G.H."/>
            <person name="Watkins K.L."/>
            <person name="Khouri H."/>
            <person name="Tallon L.J."/>
            <person name="Zaborsky J.M."/>
            <person name="Dunbar H.E."/>
            <person name="Tran P.L."/>
            <person name="Moran N.A."/>
            <person name="Eisen J.A."/>
        </authorList>
    </citation>
    <scope>NUCLEOTIDE SEQUENCE [LARGE SCALE GENOMIC DNA]</scope>
</reference>
<organism>
    <name type="scientific">Baumannia cicadellinicola subsp. Homalodisca coagulata</name>
    <dbReference type="NCBI Taxonomy" id="374463"/>
    <lineage>
        <taxon>Bacteria</taxon>
        <taxon>Pseudomonadati</taxon>
        <taxon>Pseudomonadota</taxon>
        <taxon>Gammaproteobacteria</taxon>
        <taxon>Candidatus Palibaumannia</taxon>
    </lineage>
</organism>
<evidence type="ECO:0000255" key="1">
    <source>
        <dbReference type="HAMAP-Rule" id="MF_00108"/>
    </source>
</evidence>
<proteinExistence type="inferred from homology"/>
<feature type="chain" id="PRO_1000022900" description="2-C-methyl-D-erythritol 4-phosphate cytidylyltransferase">
    <location>
        <begin position="1"/>
        <end position="241"/>
    </location>
</feature>
<feature type="site" description="Transition state stabilizer" evidence="1">
    <location>
        <position position="23"/>
    </location>
</feature>
<feature type="site" description="Transition state stabilizer" evidence="1">
    <location>
        <position position="30"/>
    </location>
</feature>
<feature type="site" description="Positions MEP for the nucleophilic attack" evidence="1">
    <location>
        <position position="162"/>
    </location>
</feature>
<feature type="site" description="Positions MEP for the nucleophilic attack" evidence="1">
    <location>
        <position position="218"/>
    </location>
</feature>
<accession>Q1LTP8</accession>
<protein>
    <recommendedName>
        <fullName evidence="1">2-C-methyl-D-erythritol 4-phosphate cytidylyltransferase</fullName>
        <ecNumber evidence="1">2.7.7.60</ecNumber>
    </recommendedName>
    <alternativeName>
        <fullName evidence="1">4-diphosphocytidyl-2C-methyl-D-erythritol synthase</fullName>
    </alternativeName>
    <alternativeName>
        <fullName evidence="1">MEP cytidylyltransferase</fullName>
        <shortName evidence="1">MCT</shortName>
    </alternativeName>
</protein>
<gene>
    <name evidence="1" type="primary">ispD</name>
    <name type="ordered locus">BCI_0211</name>
</gene>
<name>ISPD_BAUCH</name>
<keyword id="KW-0414">Isoprene biosynthesis</keyword>
<keyword id="KW-0548">Nucleotidyltransferase</keyword>
<keyword id="KW-1185">Reference proteome</keyword>
<keyword id="KW-0808">Transferase</keyword>
<comment type="function">
    <text evidence="1">Catalyzes the formation of 4-diphosphocytidyl-2-C-methyl-D-erythritol from CTP and 2-C-methyl-D-erythritol 4-phosphate (MEP).</text>
</comment>
<comment type="catalytic activity">
    <reaction evidence="1">
        <text>2-C-methyl-D-erythritol 4-phosphate + CTP + H(+) = 4-CDP-2-C-methyl-D-erythritol + diphosphate</text>
        <dbReference type="Rhea" id="RHEA:13429"/>
        <dbReference type="ChEBI" id="CHEBI:15378"/>
        <dbReference type="ChEBI" id="CHEBI:33019"/>
        <dbReference type="ChEBI" id="CHEBI:37563"/>
        <dbReference type="ChEBI" id="CHEBI:57823"/>
        <dbReference type="ChEBI" id="CHEBI:58262"/>
        <dbReference type="EC" id="2.7.7.60"/>
    </reaction>
</comment>
<comment type="pathway">
    <text evidence="1">Isoprenoid biosynthesis; isopentenyl diphosphate biosynthesis via DXP pathway; isopentenyl diphosphate from 1-deoxy-D-xylulose 5-phosphate: step 2/6.</text>
</comment>
<comment type="similarity">
    <text evidence="1">Belongs to the IspD/TarI cytidylyltransferase family. IspD subfamily.</text>
</comment>
<sequence>MTCLTRPLPNVVAILPAAGKGRRMQTTFPKQYLTIGNKTLLELTIYTLLRQPCISQIIVAISPDDYWFAQLPIAAEERVMVVTGGSKRVYSVMRALRYVKHVSWVLVHDAVRPCLHQEDLICLLTITAHSTVGGILATPVRDTIKRAGNIANVKTINYTVVRKDLWHALTPQLFMLELLKSCLQRALKEGVTVTDESAALEYCGYQPLLVPGRADNIKVTWPEDLQLASFYLSQLTNTHNK</sequence>